<evidence type="ECO:0000255" key="1">
    <source>
        <dbReference type="PROSITE-ProRule" id="PRU00625"/>
    </source>
</evidence>
<evidence type="ECO:0000255" key="2">
    <source>
        <dbReference type="PROSITE-ProRule" id="PRU00768"/>
    </source>
</evidence>
<evidence type="ECO:0000256" key="3">
    <source>
        <dbReference type="SAM" id="MobiDB-lite"/>
    </source>
</evidence>
<evidence type="ECO:0000269" key="4">
    <source>
    </source>
</evidence>
<evidence type="ECO:0000269" key="5">
    <source>
    </source>
</evidence>
<evidence type="ECO:0000269" key="6">
    <source>
    </source>
</evidence>
<evidence type="ECO:0000269" key="7">
    <source>
    </source>
</evidence>
<evidence type="ECO:0000269" key="8">
    <source>
    </source>
</evidence>
<evidence type="ECO:0000269" key="9">
    <source>
    </source>
</evidence>
<evidence type="ECO:0000269" key="10">
    <source>
    </source>
</evidence>
<evidence type="ECO:0000269" key="11">
    <source>
    </source>
</evidence>
<evidence type="ECO:0000269" key="12">
    <source>
    </source>
</evidence>
<evidence type="ECO:0000269" key="13">
    <source>
    </source>
</evidence>
<evidence type="ECO:0000269" key="14">
    <source>
    </source>
</evidence>
<evidence type="ECO:0000269" key="15">
    <source>
    </source>
</evidence>
<evidence type="ECO:0000269" key="16">
    <source>
    </source>
</evidence>
<evidence type="ECO:0000269" key="17">
    <source>
    </source>
</evidence>
<evidence type="ECO:0000303" key="18">
    <source>
    </source>
</evidence>
<evidence type="ECO:0000303" key="19">
    <source>
    </source>
</evidence>
<evidence type="ECO:0000305" key="20"/>
<evidence type="ECO:0000312" key="21">
    <source>
        <dbReference type="Araport" id="AT1G14350"/>
    </source>
</evidence>
<evidence type="ECO:0000312" key="22">
    <source>
        <dbReference type="EMBL" id="AAF43935.1"/>
    </source>
</evidence>
<accession>Q94FL6</accession>
<accession>Q9M9S7</accession>
<sequence>MEDTKKKKKKNINNNQDSKKKERHIVTWSQEEDVILREQITLHGTENWAIIASKFKDKSTRQCRRRWYTYLNSDFKRGGWSPEEDMLLCEAQRVFGNRWTEIAKVVSGRTDNAVKNRFTTLCKKRAKHEAMTKDSNSNTKRMLFLDGISTPRKSENETPIAKKLKRSHILDLTEISNYGRAEACVNQQIRSPFSVLARNATGIDSLEEQNQTSNVNESDGEGMFLKKDDPKVTALMQQAELLSSLAQKVNADNTEQSMENAWKVLQDFLNKGKENDLFRYGIPDIDFKIEEFKDLIEDLRSGYEDNQLSWRQPDLHDSPASSEYSSGSTIMVDQSGDKTQPFSADTQTEHKQVGEELLVPKNPDENMPISGEEKFSSPIQVTPLFRSLADGIPSPQFSESERSFLLKTLGIESSSPCPSANPSKPPPCKRVLLHSL</sequence>
<organism>
    <name type="scientific">Arabidopsis thaliana</name>
    <name type="common">Mouse-ear cress</name>
    <dbReference type="NCBI Taxonomy" id="3702"/>
    <lineage>
        <taxon>Eukaryota</taxon>
        <taxon>Viridiplantae</taxon>
        <taxon>Streptophyta</taxon>
        <taxon>Embryophyta</taxon>
        <taxon>Tracheophyta</taxon>
        <taxon>Spermatophyta</taxon>
        <taxon>Magnoliopsida</taxon>
        <taxon>eudicotyledons</taxon>
        <taxon>Gunneridae</taxon>
        <taxon>Pentapetalae</taxon>
        <taxon>rosids</taxon>
        <taxon>malvids</taxon>
        <taxon>Brassicales</taxon>
        <taxon>Brassicaceae</taxon>
        <taxon>Camelineae</taxon>
        <taxon>Arabidopsis</taxon>
    </lineage>
</organism>
<gene>
    <name evidence="19" type="primary">MYB124</name>
    <name evidence="18" type="synonym">FLP</name>
    <name evidence="21" type="ordered locus">At1g14350</name>
    <name evidence="22" type="ORF">F14L17.12</name>
</gene>
<feature type="chain" id="PRO_0000438722" description="Transcription factor MYB124">
    <location>
        <begin position="1"/>
        <end position="436"/>
    </location>
</feature>
<feature type="domain" description="HTH myb-type 1" evidence="1">
    <location>
        <begin position="20"/>
        <end position="71"/>
    </location>
</feature>
<feature type="domain" description="HTH myb-type 2" evidence="1">
    <location>
        <begin position="72"/>
        <end position="126"/>
    </location>
</feature>
<feature type="DNA-binding region" description="H-T-H motif" evidence="1">
    <location>
        <begin position="48"/>
        <end position="71"/>
    </location>
</feature>
<feature type="DNA-binding region" description="H-T-H motif" evidence="1">
    <location>
        <begin position="99"/>
        <end position="122"/>
    </location>
</feature>
<feature type="region of interest" description="Disordered" evidence="3">
    <location>
        <begin position="1"/>
        <end position="23"/>
    </location>
</feature>
<feature type="region of interest" description="Disordered" evidence="3">
    <location>
        <begin position="309"/>
        <end position="328"/>
    </location>
</feature>
<feature type="short sequence motif" description="Nuclear localization signal 1" evidence="2">
    <location>
        <begin position="8"/>
        <end position="15"/>
    </location>
</feature>
<feature type="short sequence motif" description="Nuclear localization signal 2" evidence="2">
    <location>
        <begin position="151"/>
        <end position="158"/>
    </location>
</feature>
<feature type="compositionally biased region" description="Basic residues" evidence="3">
    <location>
        <begin position="1"/>
        <end position="11"/>
    </location>
</feature>
<feature type="compositionally biased region" description="Polar residues" evidence="3">
    <location>
        <begin position="319"/>
        <end position="328"/>
    </location>
</feature>
<feature type="mutagenesis site" description="In flp-8; abnormal stomatal clusters formation. Impaired DNA-binding." evidence="5 6">
    <original>E</original>
    <variation>K</variation>
    <location>
        <position position="84"/>
    </location>
</feature>
<protein>
    <recommendedName>
        <fullName evidence="19">Transcription factor MYB124</fullName>
    </recommendedName>
    <alternativeName>
        <fullName evidence="19">Myb-related protein 124</fullName>
        <shortName evidence="19">AtMYB124</shortName>
    </alternativeName>
    <alternativeName>
        <fullName evidence="18">Protein FOUR LIPS</fullName>
    </alternativeName>
</protein>
<reference key="1">
    <citation type="journal article" date="2001" name="Curr. Opin. Plant Biol.">
        <title>The R2R3-MYB gene family in Arabidopsis thaliana.</title>
        <authorList>
            <person name="Stracke R."/>
            <person name="Werber M."/>
            <person name="Weisshaar B."/>
        </authorList>
    </citation>
    <scope>NUCLEOTIDE SEQUENCE [MRNA]</scope>
    <scope>GENE FAMILY</scope>
    <scope>NOMENCLATURE</scope>
    <source>
        <strain>cv. Columbia</strain>
    </source>
</reference>
<reference key="2">
    <citation type="journal article" date="2000" name="Nature">
        <title>Sequence and analysis of chromosome 1 of the plant Arabidopsis thaliana.</title>
        <authorList>
            <person name="Theologis A."/>
            <person name="Ecker J.R."/>
            <person name="Palm C.J."/>
            <person name="Federspiel N.A."/>
            <person name="Kaul S."/>
            <person name="White O."/>
            <person name="Alonso J."/>
            <person name="Altafi H."/>
            <person name="Araujo R."/>
            <person name="Bowman C.L."/>
            <person name="Brooks S.Y."/>
            <person name="Buehler E."/>
            <person name="Chan A."/>
            <person name="Chao Q."/>
            <person name="Chen H."/>
            <person name="Cheuk R.F."/>
            <person name="Chin C.W."/>
            <person name="Chung M.K."/>
            <person name="Conn L."/>
            <person name="Conway A.B."/>
            <person name="Conway A.R."/>
            <person name="Creasy T.H."/>
            <person name="Dewar K."/>
            <person name="Dunn P."/>
            <person name="Etgu P."/>
            <person name="Feldblyum T.V."/>
            <person name="Feng J.-D."/>
            <person name="Fong B."/>
            <person name="Fujii C.Y."/>
            <person name="Gill J.E."/>
            <person name="Goldsmith A.D."/>
            <person name="Haas B."/>
            <person name="Hansen N.F."/>
            <person name="Hughes B."/>
            <person name="Huizar L."/>
            <person name="Hunter J.L."/>
            <person name="Jenkins J."/>
            <person name="Johnson-Hopson C."/>
            <person name="Khan S."/>
            <person name="Khaykin E."/>
            <person name="Kim C.J."/>
            <person name="Koo H.L."/>
            <person name="Kremenetskaia I."/>
            <person name="Kurtz D.B."/>
            <person name="Kwan A."/>
            <person name="Lam B."/>
            <person name="Langin-Hooper S."/>
            <person name="Lee A."/>
            <person name="Lee J.M."/>
            <person name="Lenz C.A."/>
            <person name="Li J.H."/>
            <person name="Li Y.-P."/>
            <person name="Lin X."/>
            <person name="Liu S.X."/>
            <person name="Liu Z.A."/>
            <person name="Luros J.S."/>
            <person name="Maiti R."/>
            <person name="Marziali A."/>
            <person name="Militscher J."/>
            <person name="Miranda M."/>
            <person name="Nguyen M."/>
            <person name="Nierman W.C."/>
            <person name="Osborne B.I."/>
            <person name="Pai G."/>
            <person name="Peterson J."/>
            <person name="Pham P.K."/>
            <person name="Rizzo M."/>
            <person name="Rooney T."/>
            <person name="Rowley D."/>
            <person name="Sakano H."/>
            <person name="Salzberg S.L."/>
            <person name="Schwartz J.R."/>
            <person name="Shinn P."/>
            <person name="Southwick A.M."/>
            <person name="Sun H."/>
            <person name="Tallon L.J."/>
            <person name="Tambunga G."/>
            <person name="Toriumi M.J."/>
            <person name="Town C.D."/>
            <person name="Utterback T."/>
            <person name="Van Aken S."/>
            <person name="Vaysberg M."/>
            <person name="Vysotskaia V.S."/>
            <person name="Walker M."/>
            <person name="Wu D."/>
            <person name="Yu G."/>
            <person name="Fraser C.M."/>
            <person name="Venter J.C."/>
            <person name="Davis R.W."/>
        </authorList>
    </citation>
    <scope>NUCLEOTIDE SEQUENCE [LARGE SCALE GENOMIC DNA]</scope>
    <source>
        <strain>cv. Columbia</strain>
    </source>
</reference>
<reference key="3">
    <citation type="journal article" date="2017" name="Plant J.">
        <title>Araport11: a complete reannotation of the Arabidopsis thaliana reference genome.</title>
        <authorList>
            <person name="Cheng C.Y."/>
            <person name="Krishnakumar V."/>
            <person name="Chan A.P."/>
            <person name="Thibaud-Nissen F."/>
            <person name="Schobel S."/>
            <person name="Town C.D."/>
        </authorList>
    </citation>
    <scope>GENOME REANNOTATION</scope>
    <source>
        <strain>cv. Columbia</strain>
    </source>
</reference>
<reference key="4">
    <citation type="submission" date="2006-07" db="EMBL/GenBank/DDBJ databases">
        <title>Arabidopsis ORF clones.</title>
        <authorList>
            <person name="Kim C.J."/>
            <person name="Chen H."/>
            <person name="Quinitio C."/>
            <person name="Shinn P."/>
            <person name="Ecker J.R."/>
        </authorList>
    </citation>
    <scope>NUCLEOTIDE SEQUENCE [LARGE SCALE MRNA]</scope>
    <source>
        <strain>cv. Columbia</strain>
    </source>
</reference>
<reference key="5">
    <citation type="journal article" date="1995" name="Plant Cell">
        <title>The too many mouths and four lips mutations affect stomatal production in Arabidopsis.</title>
        <authorList>
            <person name="Yang M."/>
            <person name="Sack F.D."/>
        </authorList>
    </citation>
    <scope>FUNCTION</scope>
    <scope>DISRUPTION PHENOTYPE</scope>
    <source>
        <strain>cv. Columbia</strain>
    </source>
</reference>
<reference key="6">
    <citation type="journal article" date="1998" name="Planta">
        <title>Divergent regulation of stomatal initiation and patterning in organ and suborgan regions of the Arabidopsis mutants too many mouths and four lips.</title>
        <authorList>
            <person name="Geisler M."/>
            <person name="Yang M."/>
            <person name="Sack F.D."/>
        </authorList>
    </citation>
    <scope>FUNCTION</scope>
    <scope>DISRUPTION PHENOTYPE</scope>
    <source>
        <strain>cv. C24</strain>
        <strain>cv. Columbia</strain>
    </source>
</reference>
<reference key="7">
    <citation type="journal article" date="2001" name="Curr. Opin. Plant Biol.">
        <title>Stomatal cell biology.</title>
        <authorList>
            <person name="von Groll U."/>
            <person name="Altmann T."/>
        </authorList>
    </citation>
    <scope>REVIEW ON STOMATAL DEVELOPMENT</scope>
</reference>
<reference key="8">
    <citation type="journal article" date="2002" name="Arabidopsis Book">
        <title>Stomatal development in Arabidopsis.</title>
        <authorList>
            <person name="Nadeau J.A."/>
            <person name="Sack F.D."/>
        </authorList>
    </citation>
    <scope>REVIEW ON STOMATAL DEVELOPMENT</scope>
</reference>
<reference key="9">
    <citation type="journal article" date="2005" name="Plant Cell">
        <title>The Arabidopsis R2R3 MYB proteins FOUR LIPS and MYB88 restrict divisions late in the stomatal cell lineage.</title>
        <authorList>
            <person name="Lai L.B."/>
            <person name="Nadeau J.A."/>
            <person name="Lucas J."/>
            <person name="Lee E.-K."/>
            <person name="Nakagawa T."/>
            <person name="Zhao L."/>
            <person name="Geisler M."/>
            <person name="Sack F.D."/>
        </authorList>
    </citation>
    <scope>FUNCTION</scope>
    <scope>DISRUPTION PHENOTYPE</scope>
    <scope>MUTAGENESIS OF GLU-84</scope>
    <scope>TISSUE SPECIFICITY</scope>
    <source>
        <strain>cv. C24</strain>
        <strain>cv. Columbia</strain>
        <strain>cv. Landsberg erecta</strain>
    </source>
</reference>
<reference key="10">
    <citation type="journal article" date="2010" name="Plant Cell">
        <title>Regulation of cell proliferation in the stomatal lineage by the Arabidopsis MYB FOUR LIPS via direct targeting of core cell cycle genes.</title>
        <authorList>
            <person name="Xie Z."/>
            <person name="Lee E."/>
            <person name="Lucas J.R."/>
            <person name="Morohashi K."/>
            <person name="Li D."/>
            <person name="Murray J.A."/>
            <person name="Sack F.D."/>
            <person name="Grotewold E."/>
        </authorList>
    </citation>
    <scope>FUNCTION</scope>
    <scope>DISRUPTION PHENOTYPE</scope>
    <scope>MUTAGENESIS OF GLU-84</scope>
    <scope>SUBCELLULAR LOCATION</scope>
    <source>
        <strain>cv. Columbia</strain>
    </source>
</reference>
<reference key="11">
    <citation type="journal article" date="2010" name="Plant J.">
        <title>Role of the stomatal development regulators FLP/MYB88 in abiotic stress responses.</title>
        <authorList>
            <person name="Xie Z."/>
            <person name="Li D."/>
            <person name="Wang L."/>
            <person name="Sack F.D."/>
            <person name="Grotewold E."/>
        </authorList>
    </citation>
    <scope>FUNCTION</scope>
    <scope>DISRUPTION PHENOTYPE</scope>
</reference>
<reference key="12">
    <citation type="journal article" date="2011" name="EMBO J.">
        <title>Developmental regulation of CYCA2s contributes to tissue-specific proliferation in Arabidopsis.</title>
        <authorList>
            <person name="Vanneste S."/>
            <person name="Coppens F."/>
            <person name="Lee E."/>
            <person name="Donner T.J."/>
            <person name="Xie Z."/>
            <person name="Van Isterdael G."/>
            <person name="Dhondt S."/>
            <person name="De Winter F."/>
            <person name="De Rybel B."/>
            <person name="Vuylsteke M."/>
            <person name="De Veylder L."/>
            <person name="Friml J."/>
            <person name="Inze D."/>
            <person name="Grotewold E."/>
            <person name="Scarpella E."/>
            <person name="Sack F."/>
            <person name="Beemster G.T."/>
            <person name="Beeckman T."/>
        </authorList>
    </citation>
    <scope>FUNCTION</scope>
    <scope>DISRUPTION PHENOTYPE</scope>
</reference>
<reference key="13">
    <citation type="journal article" date="2012" name="J. Exp. Bot.">
        <title>The R2R3 MYB transcription factors FOUR LIPS and MYB88 regulate female reproductive development.</title>
        <authorList>
            <person name="Makkena S."/>
            <person name="Lee E."/>
            <person name="Sack F.D."/>
            <person name="Lamb R.S."/>
        </authorList>
    </citation>
    <scope>FUNCTION</scope>
    <scope>DISRUPTION PHENOTYPE</scope>
    <scope>DEVELOPMENTAL STAGE</scope>
    <source>
        <strain>cv. Columbia</strain>
        <strain>cv. Landsberg erecta</strain>
    </source>
</reference>
<reference key="14">
    <citation type="journal article" date="2013" name="J. Exp. Bot.">
        <title>FOUR LIPS and MYB88 conditionally restrict the G1/S transition during stomatal formation.</title>
        <authorList>
            <person name="Lee E."/>
            <person name="Liu X."/>
            <person name="Eglit Y."/>
            <person name="Sack F."/>
        </authorList>
    </citation>
    <scope>FUNCTION</scope>
    <scope>DISRUPTION PHENOTYPE</scope>
    <source>
        <strain>cv. Columbia</strain>
    </source>
</reference>
<reference key="15">
    <citation type="journal article" date="2014" name="J. Exp. Bot.">
        <title>Requirement for A-type cyclin-dependent kinase and cyclins for the terminal division in the stomatal lineage of Arabidopsis.</title>
        <authorList>
            <person name="Yang K."/>
            <person name="Wang H."/>
            <person name="Xue S."/>
            <person name="Qu X."/>
            <person name="Zou J."/>
            <person name="Le J."/>
        </authorList>
    </citation>
    <scope>FUNCTION</scope>
    <scope>DISRUPTION PHENOTYPE</scope>
    <source>
        <strain>cv. Columbia</strain>
    </source>
</reference>
<reference key="16">
    <citation type="journal article" date="2014" name="Plant J.">
        <title>Deep functional redundancy between FAMA and FOUR LIPS in stomatal development.</title>
        <authorList>
            <person name="Lee E."/>
            <person name="Lucas J.R."/>
            <person name="Sack F.D."/>
        </authorList>
    </citation>
    <scope>FUNCTION</scope>
    <scope>DISRUPTION PHENOTYPE</scope>
    <scope>DEVELOPMENTAL STAGE</scope>
    <scope>INTERACTION WITH RBR1</scope>
    <source>
        <strain>cv. Columbia</strain>
    </source>
</reference>
<reference key="17">
    <citation type="journal article" date="2014" name="Plant J.">
        <title>Arabidopsis guard cell integrity involves the epigenetic stabilization of the FLP and FAMA transcription factor genes.</title>
        <authorList>
            <person name="Lee E."/>
            <person name="Lucas J.R."/>
            <person name="Goodrich J."/>
            <person name="Sack F.D."/>
        </authorList>
    </citation>
    <scope>FUNCTION</scope>
    <source>
        <strain>cv. Columbia</strain>
    </source>
</reference>
<reference key="18">
    <citation type="journal article" date="2015" name="Am. J. Bot.">
        <title>The FOUR LIPS and MYB88 transcription factor genes are widely expressed in Arabidopsis thaliana during development.</title>
        <authorList>
            <person name="Lei Q."/>
            <person name="Lee E."/>
            <person name="Keerthisinghe S."/>
            <person name="Lai L."/>
            <person name="Li M."/>
            <person name="Lucas J.R."/>
            <person name="Wen X."/>
            <person name="Ren X."/>
            <person name="Sack F.D."/>
        </authorList>
    </citation>
    <scope>TISSUE SPECIFICITY</scope>
    <scope>DEVELOPMENTAL STAGE</scope>
    <source>
        <strain>cv. Columbia GL1</strain>
    </source>
</reference>
<reference key="19">
    <citation type="journal article" date="2015" name="Nat. Commun.">
        <title>A coherent transcriptional feed-forward motif model for mediating auxin-sensitive PIN3 expression during lateral root development.</title>
        <authorList>
            <person name="Chen Q."/>
            <person name="Liu Y."/>
            <person name="Maere S."/>
            <person name="Lee E."/>
            <person name="Van Isterdael G."/>
            <person name="Xie Z."/>
            <person name="Xuan W."/>
            <person name="Lucas J."/>
            <person name="Vassileva V."/>
            <person name="Kitakura S."/>
            <person name="Marhavy P."/>
            <person name="Wabnik K."/>
            <person name="Geldner N."/>
            <person name="Benkova E."/>
            <person name="Le J."/>
            <person name="Fukaki H."/>
            <person name="Grotewold E."/>
            <person name="Li C."/>
            <person name="Friml J."/>
            <person name="Sack F."/>
            <person name="Beeckman T."/>
            <person name="Vanneste S."/>
        </authorList>
    </citation>
    <scope>FUNCTION</scope>
    <scope>DISRUPTION PHENOTYPE</scope>
    <scope>INDUCTION BY AUXIN</scope>
</reference>
<reference key="20">
    <citation type="journal article" date="2015" name="Nat. Commun.">
        <title>Transcriptional regulation of PIN genes by FOUR LIPS and MYB88 during Arabidopsis root gravitropism.</title>
        <authorList>
            <person name="Wang H.-Z."/>
            <person name="Yang K.-Z."/>
            <person name="Zou J.-J."/>
            <person name="Zhu L.-L."/>
            <person name="Xie Z.D."/>
            <person name="Morita M.T."/>
            <person name="Tasaka M."/>
            <person name="Friml J."/>
            <person name="Grotewold E."/>
            <person name="Beeckman T."/>
            <person name="Vanneste S."/>
            <person name="Sack F."/>
            <person name="Le J."/>
        </authorList>
    </citation>
    <scope>FUNCTION</scope>
    <scope>DISRUPTION PHENOTYPE</scope>
    <scope>DEVELOPMENTAL STAGE</scope>
    <source>
        <strain>cv. Columbia</strain>
        <strain>cv. Landsberg erecta</strain>
    </source>
</reference>
<dbReference type="EMBL" id="AF371982">
    <property type="protein sequence ID" value="AAK54745.2"/>
    <property type="molecule type" value="mRNA"/>
</dbReference>
<dbReference type="EMBL" id="AC012188">
    <property type="protein sequence ID" value="AAF43935.1"/>
    <property type="status" value="ALT_SEQ"/>
    <property type="molecule type" value="Genomic_DNA"/>
</dbReference>
<dbReference type="EMBL" id="CP002684">
    <property type="protein sequence ID" value="AEE29150.1"/>
    <property type="molecule type" value="Genomic_DNA"/>
</dbReference>
<dbReference type="EMBL" id="CP002684">
    <property type="protein sequence ID" value="AEE29151.1"/>
    <property type="molecule type" value="Genomic_DNA"/>
</dbReference>
<dbReference type="EMBL" id="BT026126">
    <property type="protein sequence ID" value="ABG48482.1"/>
    <property type="molecule type" value="mRNA"/>
</dbReference>
<dbReference type="PIR" id="H86277">
    <property type="entry name" value="H86277"/>
</dbReference>
<dbReference type="RefSeq" id="NP_001077534.1">
    <property type="nucleotide sequence ID" value="NM_001084065.3"/>
</dbReference>
<dbReference type="RefSeq" id="NP_563948.1">
    <property type="nucleotide sequence ID" value="NM_101302.3"/>
</dbReference>
<dbReference type="SMR" id="Q94FL6"/>
<dbReference type="FunCoup" id="Q94FL6">
    <property type="interactions" value="468"/>
</dbReference>
<dbReference type="STRING" id="3702.Q94FL6"/>
<dbReference type="PaxDb" id="3702-AT1G14350.2"/>
<dbReference type="EnsemblPlants" id="AT1G14350.1">
    <property type="protein sequence ID" value="AT1G14350.1"/>
    <property type="gene ID" value="AT1G14350"/>
</dbReference>
<dbReference type="EnsemblPlants" id="AT1G14350.2">
    <property type="protein sequence ID" value="AT1G14350.2"/>
    <property type="gene ID" value="AT1G14350"/>
</dbReference>
<dbReference type="GeneID" id="837997"/>
<dbReference type="Gramene" id="AT1G14350.1">
    <property type="protein sequence ID" value="AT1G14350.1"/>
    <property type="gene ID" value="AT1G14350"/>
</dbReference>
<dbReference type="Gramene" id="AT1G14350.2">
    <property type="protein sequence ID" value="AT1G14350.2"/>
    <property type="gene ID" value="AT1G14350"/>
</dbReference>
<dbReference type="KEGG" id="ath:AT1G14350"/>
<dbReference type="Araport" id="AT1G14350"/>
<dbReference type="TAIR" id="AT1G14350">
    <property type="gene designation" value="FLP"/>
</dbReference>
<dbReference type="eggNOG" id="KOG0048">
    <property type="taxonomic scope" value="Eukaryota"/>
</dbReference>
<dbReference type="HOGENOM" id="CLU_018700_1_0_1"/>
<dbReference type="InParanoid" id="Q94FL6"/>
<dbReference type="OrthoDB" id="2143914at2759"/>
<dbReference type="PhylomeDB" id="Q94FL6"/>
<dbReference type="PRO" id="PR:Q94FL6"/>
<dbReference type="Proteomes" id="UP000006548">
    <property type="component" value="Chromosome 1"/>
</dbReference>
<dbReference type="ExpressionAtlas" id="Q94FL6">
    <property type="expression patterns" value="baseline and differential"/>
</dbReference>
<dbReference type="GO" id="GO:0005634">
    <property type="term" value="C:nucleus"/>
    <property type="evidence" value="ECO:0000314"/>
    <property type="project" value="UniProtKB"/>
</dbReference>
<dbReference type="GO" id="GO:0003700">
    <property type="term" value="F:DNA-binding transcription factor activity"/>
    <property type="evidence" value="ECO:0000314"/>
    <property type="project" value="UniProtKB"/>
</dbReference>
<dbReference type="GO" id="GO:0043565">
    <property type="term" value="F:sequence-specific DNA binding"/>
    <property type="evidence" value="ECO:0000314"/>
    <property type="project" value="UniProtKB"/>
</dbReference>
<dbReference type="GO" id="GO:0000976">
    <property type="term" value="F:transcription cis-regulatory region binding"/>
    <property type="evidence" value="ECO:0000353"/>
    <property type="project" value="TAIR"/>
</dbReference>
<dbReference type="GO" id="GO:0009926">
    <property type="term" value="P:auxin polar transport"/>
    <property type="evidence" value="ECO:0000315"/>
    <property type="project" value="UniProtKB"/>
</dbReference>
<dbReference type="GO" id="GO:0009734">
    <property type="term" value="P:auxin-activated signaling pathway"/>
    <property type="evidence" value="ECO:0007669"/>
    <property type="project" value="UniProtKB-KW"/>
</dbReference>
<dbReference type="GO" id="GO:0009553">
    <property type="term" value="P:embryo sac development"/>
    <property type="evidence" value="ECO:0000315"/>
    <property type="project" value="TAIR"/>
</dbReference>
<dbReference type="GO" id="GO:0010052">
    <property type="term" value="P:guard cell differentiation"/>
    <property type="evidence" value="ECO:0000316"/>
    <property type="project" value="UniProtKB"/>
</dbReference>
<dbReference type="GO" id="GO:0010235">
    <property type="term" value="P:guard mother cell cytokinesis"/>
    <property type="evidence" value="ECO:0000315"/>
    <property type="project" value="UniProtKB"/>
</dbReference>
<dbReference type="GO" id="GO:0010444">
    <property type="term" value="P:guard mother cell differentiation"/>
    <property type="evidence" value="ECO:0000315"/>
    <property type="project" value="UniProtKB"/>
</dbReference>
<dbReference type="GO" id="GO:0090436">
    <property type="term" value="P:leaf pavement cell development"/>
    <property type="evidence" value="ECO:0000315"/>
    <property type="project" value="UniProtKB"/>
</dbReference>
<dbReference type="GO" id="GO:0009554">
    <property type="term" value="P:megasporogenesis"/>
    <property type="evidence" value="ECO:0000315"/>
    <property type="project" value="UniProtKB"/>
</dbReference>
<dbReference type="GO" id="GO:0050891">
    <property type="term" value="P:multicellular organismal-level water homeostasis"/>
    <property type="evidence" value="ECO:0000315"/>
    <property type="project" value="UniProtKB"/>
</dbReference>
<dbReference type="GO" id="GO:1901333">
    <property type="term" value="P:positive regulation of lateral root development"/>
    <property type="evidence" value="ECO:0000315"/>
    <property type="project" value="UniProtKB"/>
</dbReference>
<dbReference type="GO" id="GO:1901002">
    <property type="term" value="P:positive regulation of response to salt stress"/>
    <property type="evidence" value="ECO:0000315"/>
    <property type="project" value="UniProtKB"/>
</dbReference>
<dbReference type="GO" id="GO:1902584">
    <property type="term" value="P:positive regulation of response to water deprivation"/>
    <property type="evidence" value="ECO:0000315"/>
    <property type="project" value="UniProtKB"/>
</dbReference>
<dbReference type="GO" id="GO:0080022">
    <property type="term" value="P:primary root development"/>
    <property type="evidence" value="ECO:0000315"/>
    <property type="project" value="UniProtKB"/>
</dbReference>
<dbReference type="GO" id="GO:1902806">
    <property type="term" value="P:regulation of cell cycle G1/S phase transition"/>
    <property type="evidence" value="ECO:0000315"/>
    <property type="project" value="UniProtKB"/>
</dbReference>
<dbReference type="GO" id="GO:0032875">
    <property type="term" value="P:regulation of DNA endoreduplication"/>
    <property type="evidence" value="ECO:0000315"/>
    <property type="project" value="UniProtKB"/>
</dbReference>
<dbReference type="GO" id="GO:0006355">
    <property type="term" value="P:regulation of DNA-templated transcription"/>
    <property type="evidence" value="ECO:0000314"/>
    <property type="project" value="UniProtKB"/>
</dbReference>
<dbReference type="GO" id="GO:2000037">
    <property type="term" value="P:regulation of stomatal complex patterning"/>
    <property type="evidence" value="ECO:0000315"/>
    <property type="project" value="UniProtKB"/>
</dbReference>
<dbReference type="GO" id="GO:0009737">
    <property type="term" value="P:response to abscisic acid"/>
    <property type="evidence" value="ECO:0000315"/>
    <property type="project" value="UniProtKB"/>
</dbReference>
<dbReference type="GO" id="GO:0009733">
    <property type="term" value="P:response to auxin"/>
    <property type="evidence" value="ECO:0000270"/>
    <property type="project" value="UniProtKB"/>
</dbReference>
<dbReference type="GO" id="GO:0009629">
    <property type="term" value="P:response to gravity"/>
    <property type="evidence" value="ECO:0000315"/>
    <property type="project" value="UniProtKB"/>
</dbReference>
<dbReference type="GO" id="GO:0010376">
    <property type="term" value="P:stomatal complex formation"/>
    <property type="evidence" value="ECO:0000315"/>
    <property type="project" value="UniProtKB"/>
</dbReference>
<dbReference type="CDD" id="cd00167">
    <property type="entry name" value="SANT"/>
    <property type="match status" value="2"/>
</dbReference>
<dbReference type="FunFam" id="1.10.10.60:FF:000355">
    <property type="entry name" value="Transcription factor MYB124"/>
    <property type="match status" value="1"/>
</dbReference>
<dbReference type="Gene3D" id="1.10.10.60">
    <property type="entry name" value="Homeodomain-like"/>
    <property type="match status" value="2"/>
</dbReference>
<dbReference type="InterPro" id="IPR009057">
    <property type="entry name" value="Homeodomain-like_sf"/>
</dbReference>
<dbReference type="InterPro" id="IPR017930">
    <property type="entry name" value="Myb_dom"/>
</dbReference>
<dbReference type="InterPro" id="IPR050560">
    <property type="entry name" value="MYB_TF"/>
</dbReference>
<dbReference type="InterPro" id="IPR001005">
    <property type="entry name" value="SANT/Myb"/>
</dbReference>
<dbReference type="PANTHER" id="PTHR45614">
    <property type="entry name" value="MYB PROTEIN-RELATED"/>
    <property type="match status" value="1"/>
</dbReference>
<dbReference type="PANTHER" id="PTHR45614:SF76">
    <property type="entry name" value="TRANSCRIPTION FACTOR MYB124"/>
    <property type="match status" value="1"/>
</dbReference>
<dbReference type="Pfam" id="PF13921">
    <property type="entry name" value="Myb_DNA-bind_6"/>
    <property type="match status" value="1"/>
</dbReference>
<dbReference type="SMART" id="SM00717">
    <property type="entry name" value="SANT"/>
    <property type="match status" value="2"/>
</dbReference>
<dbReference type="SUPFAM" id="SSF46689">
    <property type="entry name" value="Homeodomain-like"/>
    <property type="match status" value="2"/>
</dbReference>
<dbReference type="PROSITE" id="PS51294">
    <property type="entry name" value="HTH_MYB"/>
    <property type="match status" value="2"/>
</dbReference>
<proteinExistence type="evidence at protein level"/>
<comment type="function">
    <text evidence="4 5 6 7 8 9 10 11 12 13 15 16 17">Transcription factor that binds to DNA in promoters cis-regulatory element 5'-GGCGCGC-3' of cell cycle genes, including cyclins, cyclin-dependent kinases (CDKs), and components of the pre-replication complex (PubMed:20675570, PubMed:24687979). Binds to DNA in promoters cis-regulatory element 5'-AGCCG-3' of auxin regulated genes (e.g. PIN3 and PIN7) (PubMed:26578169). Together with FAMA and MYB88, ensures that stomata contain just two guard cells (GCs) by enforcing a single symmetric precursor cell division before stomatal maturity (PubMed:24571519). Represses the expression of the mitosis-inducing factors CDKB1-1 and CDKA-1, specifically required for the last guard mother cells (GMC) symmetric divisions in the stomatal pathway (PubMed:20675570, PubMed:24687979). Represses CYCA2-3 in newly formed guard cells (PubMed:21772250). Together with MYB88, regulates stomata spacing by restricting divisions late in the stomatal cell lineage thus limiting the number of GMC divisions (PubMed:11536724, PubMed:16155180, PubMed:24123248, PubMed:9684356). In collaboration with CDKB1-1 and CDKB1-2, restrict the G1/S transition and chloroplast and nuclear number during stomatal formation, and normally maintain fate and developmental progression throughout the stomatal cell lineage (PubMed:24123248). Also involved in the shape regulation of pavement cells (PubMed:9684356). Involved in sensing and/or transducing abiotic stress (e.g. drought and salt), probably via the positive regulation of NAC019 (PubMed:21105921). Regulates female reproduction being required for entry into megasporogenesis, probably via the regulation of cell cycle genes (PubMed:22915737). Promotes histone H3K27me3 marks and represses stem cell gene expression (PubMed:24654956). Required for lateral roots (LRs) initiation via the regulation of PIN3 expression in an auxin-dependent manner (PubMed:26578065). Involved in responses to gravity stimulation in primary roots by regulating the transcription of PIN3 and PIN7 in gravity-sensing cells, thus modulating auxin asymmetric redistribution (PubMed:26578169).</text>
</comment>
<comment type="subunit">
    <text evidence="11">Interacts with RBR1.</text>
</comment>
<comment type="subcellular location">
    <subcellularLocation>
        <location evidence="1 6">Nucleus</location>
    </subcellularLocation>
</comment>
<comment type="tissue specificity">
    <text evidence="5 14">Expressed in all shoot organs with higher levels in leaves, stems, flowers, siliques and floral buds. Also detected in roots tips.</text>
</comment>
<comment type="developmental stage">
    <text evidence="5 9 11 14 16">Expressed at the transition to terminal stomatal differentiation, just before and after the symmetric division of stomatal differentiation, being confined to late-stage guard mother cells (GMC) and to young, still differentiating guard cells (PubMed:16155180, PubMed:24571519). Detected in unopened flower buds, at the bases of sepals, petals, and stamens and in the receptacle of carpels, as well as both in style and stigma. Present at strong levels in the placenta within the ovary. Accumulates during ovule development in a dynamic pattern; first observed at high levels in the funiculus once integument outgrowth has begun and persists into later stages. Also expressed in the nucellus of younger ovules, especially in the megaspore mother cell (MMC) and in epidermal cells. Present in integuments, in the endothelial layer and the outer layer of the outer integument, which will form the mucilage-containing seed coat cells (PubMed:22915737). In developing embryos, first detected in cells in the ground tissue meristem at the early heart stage accumulates in the torpedo stage. In mature embryos, expressed in the embryonic hypocotyl and root tip. In seedlings, present first in the lower part of the hypocotyl and in the root tip, and later in petioles of cotyledons, young leaves, and lateral root primordia, near the pericycle. In young plants, strongly expressed in petioles of young leaves and cotyledons, especially in veins, in the basal part of young first leaves and cotyledons, and in root tips of lateral roots. Detected in the phloem, as well as in the cortex of inflorescence stems (PubMed:26391711). In roots, present in the root tip in columella cells, specifically in the lower tier of columella cells, as well as in developing metaxylem (PubMed:26391711, PubMed:26578169). Widely expressed in freshly emerged lateral roots. In elongating lateral roots, confined at high levels transiently in columella cells until differentiation (PubMed:26578169). Expressed at the base of developing flowers, including ovaries. In flowers, detected in ovaries, receptacles, and transiently, in anthers, and, later, in filaments. Also detected in the valve margins and receptacles of siliques and at the joint between the stigma and the style, as well as in the tapetum around pollen grains in maturing anthers (PubMed:26391711).</text>
</comment>
<comment type="induction">
    <text evidence="15">Strongly induced by auxin in a IAA14/SLR1 and ARF7 dependent manner, especially in xylem pole pericycle cells, lateral roots initiating cells.</text>
</comment>
<comment type="disruption phenotype">
    <text evidence="4 5 6 7 8 9 10 11 13 15 16 17">Abnormal stomatal clusters formation composed by two to four adjacent stomata and some unpaired guard cells originating of extra symmetric divisions in cells with an abnormally persistent guard mother cell (GMC) identity (PubMed:11536724, PubMed:16155180, PubMed:20675570, PubMed:9684356). Abnormal stomatal cluster formation is complemented by FAMA (PubMed:24571519). Increased accumulation of CDKB1-1 in single flp-1 and double flp-1 myb88 mutants (PubMed:20675570). Induction of ectopic precursor cell division and delayed stomatal differentiation. End wall thickenings in all first generation GMCs (PubMed:16155180). Stronger accumulation of stomatal clusters separated by jigsaw-shaped pavement cells with wavy anticlinal walls in dorsiventral (e.g. cotyledons, sepals, and anthers) than in cylindrical organs (e.g. stems, flower stalks, and siliques), where pavement cells are rectangular (PubMed:9684356). Double mutants flp-7 myb88 and flp-1 myb88 have strong defects in stomata repartition with large stomatal clusters formation (PubMed:16155180). Double mutants flp-1 myb88 have increased susceptibility to drought and high salt (NaCl), as well as increased rates of water loss; these phenotypes are associated with reduced accumulation of many typical abiotic stress gene transcripts. Lower stomatal closure in response to abscisic acid (ABA) treatment (PubMed:21105921). Accumulation of CYCA2-3 in newly formed guard cells in flp-1 myb88 double mutant (PubMed:21772250). The double mutants flp-1 myb88 and flp-7 myb88 treated with oryzalin, a microtubule depolymerizing drug, exhibit round-to-oval-shaped single guard cells (sGCs) associated with increased DNA content due to endoreplication leading to 10C DNA levels. The quadruple mutant flp-1 myb88 cdkb1;1 cdkb1;2 has a reduced number of large single guard cells blocked at mitosis, with strongly altered shape and size and characterized by enlarged nucleus due to endomitosis and endocycling, as well as extensive chloroplast replication (PubMed:24123248). The double mutant flp-1 myb88 displays an enhanced stomatal phenotype with more and larger stomatal clusters. Triple mutants cdka;1 flp-1 myb88 don't have guard cells stacks but accumulates sGCs. Accumulation of CDKA-1 in the double mutant flp-1 myb88 (PubMed:24687979). Increased number of ovules produced by the placenta but reduced female fertility due to defective meiotic entry and progression, and subsequent altered embryo sac development, thus leading to reduced seed set (PubMed:22915737). Reduced numbers of lateral roots (LRs). The double mutants flp-1 myb88 and flp-7 myb88 lack lateral roots with reduced PIN3 levels (PubMed:26578065). Gravitropic defects in primary roots associated with a delayed auxin asymmetric redistribution due to reduced PIN3 and PIN7 levels (PubMed:26578169).</text>
</comment>
<comment type="sequence caution" evidence="20">
    <conflict type="erroneous gene model prediction">
        <sequence resource="EMBL-CDS" id="AAF43935"/>
    </conflict>
</comment>
<keyword id="KW-0927">Auxin signaling pathway</keyword>
<keyword id="KW-0131">Cell cycle</keyword>
<keyword id="KW-0217">Developmental protein</keyword>
<keyword id="KW-0238">DNA-binding</keyword>
<keyword id="KW-0539">Nucleus</keyword>
<keyword id="KW-1185">Reference proteome</keyword>
<keyword id="KW-0677">Repeat</keyword>
<keyword id="KW-0678">Repressor</keyword>
<keyword id="KW-0346">Stress response</keyword>
<keyword id="KW-0804">Transcription</keyword>
<keyword id="KW-0805">Transcription regulation</keyword>
<name>MY124_ARATH</name>